<reference key="1">
    <citation type="submission" date="2008-06" db="EMBL/GenBank/DDBJ databases">
        <title>Complete sequence of Chloroherpeton thalassium ATCC 35110.</title>
        <authorList>
            <consortium name="US DOE Joint Genome Institute"/>
            <person name="Lucas S."/>
            <person name="Copeland A."/>
            <person name="Lapidus A."/>
            <person name="Glavina del Rio T."/>
            <person name="Dalin E."/>
            <person name="Tice H."/>
            <person name="Bruce D."/>
            <person name="Goodwin L."/>
            <person name="Pitluck S."/>
            <person name="Schmutz J."/>
            <person name="Larimer F."/>
            <person name="Land M."/>
            <person name="Hauser L."/>
            <person name="Kyrpides N."/>
            <person name="Mikhailova N."/>
            <person name="Liu Z."/>
            <person name="Li T."/>
            <person name="Zhao F."/>
            <person name="Overmann J."/>
            <person name="Bryant D.A."/>
            <person name="Richardson P."/>
        </authorList>
    </citation>
    <scope>NUCLEOTIDE SEQUENCE [LARGE SCALE GENOMIC DNA]</scope>
    <source>
        <strain>ATCC 35110 / GB-78</strain>
    </source>
</reference>
<evidence type="ECO:0000255" key="1">
    <source>
        <dbReference type="HAMAP-Rule" id="MF_01337"/>
    </source>
</evidence>
<evidence type="ECO:0000305" key="2"/>
<feature type="chain" id="PRO_1000142640" description="Large ribosomal subunit protein uL18">
    <location>
        <begin position="1"/>
        <end position="120"/>
    </location>
</feature>
<comment type="function">
    <text evidence="1">This is one of the proteins that bind and probably mediate the attachment of the 5S RNA into the large ribosomal subunit, where it forms part of the central protuberance.</text>
</comment>
<comment type="subunit">
    <text evidence="1">Part of the 50S ribosomal subunit; part of the 5S rRNA/L5/L18/L25 subcomplex. Contacts the 5S and 23S rRNAs.</text>
</comment>
<comment type="similarity">
    <text evidence="1">Belongs to the universal ribosomal protein uL18 family.</text>
</comment>
<accession>B3QYE0</accession>
<name>RL18_CHLT3</name>
<protein>
    <recommendedName>
        <fullName evidence="1">Large ribosomal subunit protein uL18</fullName>
    </recommendedName>
    <alternativeName>
        <fullName evidence="2">50S ribosomal protein L18</fullName>
    </alternativeName>
</protein>
<dbReference type="EMBL" id="CP001100">
    <property type="protein sequence ID" value="ACF13568.1"/>
    <property type="molecule type" value="Genomic_DNA"/>
</dbReference>
<dbReference type="RefSeq" id="WP_012499652.1">
    <property type="nucleotide sequence ID" value="NC_011026.1"/>
</dbReference>
<dbReference type="SMR" id="B3QYE0"/>
<dbReference type="STRING" id="517418.Ctha_1104"/>
<dbReference type="KEGG" id="cts:Ctha_1104"/>
<dbReference type="eggNOG" id="COG0256">
    <property type="taxonomic scope" value="Bacteria"/>
</dbReference>
<dbReference type="HOGENOM" id="CLU_098841_0_1_10"/>
<dbReference type="OrthoDB" id="9810939at2"/>
<dbReference type="Proteomes" id="UP000001208">
    <property type="component" value="Chromosome"/>
</dbReference>
<dbReference type="GO" id="GO:0022625">
    <property type="term" value="C:cytosolic large ribosomal subunit"/>
    <property type="evidence" value="ECO:0007669"/>
    <property type="project" value="TreeGrafter"/>
</dbReference>
<dbReference type="GO" id="GO:0008097">
    <property type="term" value="F:5S rRNA binding"/>
    <property type="evidence" value="ECO:0007669"/>
    <property type="project" value="TreeGrafter"/>
</dbReference>
<dbReference type="GO" id="GO:0003735">
    <property type="term" value="F:structural constituent of ribosome"/>
    <property type="evidence" value="ECO:0007669"/>
    <property type="project" value="InterPro"/>
</dbReference>
<dbReference type="GO" id="GO:0006412">
    <property type="term" value="P:translation"/>
    <property type="evidence" value="ECO:0007669"/>
    <property type="project" value="UniProtKB-UniRule"/>
</dbReference>
<dbReference type="CDD" id="cd00432">
    <property type="entry name" value="Ribosomal_L18_L5e"/>
    <property type="match status" value="1"/>
</dbReference>
<dbReference type="FunFam" id="3.30.420.100:FF:000001">
    <property type="entry name" value="50S ribosomal protein L18"/>
    <property type="match status" value="1"/>
</dbReference>
<dbReference type="Gene3D" id="3.30.420.100">
    <property type="match status" value="1"/>
</dbReference>
<dbReference type="HAMAP" id="MF_01337_B">
    <property type="entry name" value="Ribosomal_uL18_B"/>
    <property type="match status" value="1"/>
</dbReference>
<dbReference type="InterPro" id="IPR004389">
    <property type="entry name" value="Ribosomal_uL18_bac-type"/>
</dbReference>
<dbReference type="InterPro" id="IPR005484">
    <property type="entry name" value="Ribosomal_uL18_bac/euk"/>
</dbReference>
<dbReference type="NCBIfam" id="TIGR00060">
    <property type="entry name" value="L18_bact"/>
    <property type="match status" value="1"/>
</dbReference>
<dbReference type="PANTHER" id="PTHR12899">
    <property type="entry name" value="39S RIBOSOMAL PROTEIN L18, MITOCHONDRIAL"/>
    <property type="match status" value="1"/>
</dbReference>
<dbReference type="PANTHER" id="PTHR12899:SF3">
    <property type="entry name" value="LARGE RIBOSOMAL SUBUNIT PROTEIN UL18M"/>
    <property type="match status" value="1"/>
</dbReference>
<dbReference type="Pfam" id="PF00861">
    <property type="entry name" value="Ribosomal_L18p"/>
    <property type="match status" value="1"/>
</dbReference>
<dbReference type="SUPFAM" id="SSF53137">
    <property type="entry name" value="Translational machinery components"/>
    <property type="match status" value="1"/>
</dbReference>
<proteinExistence type="inferred from homology"/>
<keyword id="KW-1185">Reference proteome</keyword>
<keyword id="KW-0687">Ribonucleoprotein</keyword>
<keyword id="KW-0689">Ribosomal protein</keyword>
<keyword id="KW-0694">RNA-binding</keyword>
<keyword id="KW-0699">rRNA-binding</keyword>
<sequence length="120" mass="13227">MSSKSKFVRRQRIKRRVRSVVSGTEQRPRLTVFRSLSHIYAQLIDDVNGHTLVAASSMPSKGASLLKGKKSDVSREVGKALAEKAKAKGIDAVVFDRNGYRYHGRVKALAEGAREGGLKF</sequence>
<organism>
    <name type="scientific">Chloroherpeton thalassium (strain ATCC 35110 / GB-78)</name>
    <dbReference type="NCBI Taxonomy" id="517418"/>
    <lineage>
        <taxon>Bacteria</taxon>
        <taxon>Pseudomonadati</taxon>
        <taxon>Chlorobiota</taxon>
        <taxon>Chlorobiia</taxon>
        <taxon>Chlorobiales</taxon>
        <taxon>Chloroherpetonaceae</taxon>
        <taxon>Chloroherpeton</taxon>
    </lineage>
</organism>
<gene>
    <name evidence="1" type="primary">rplR</name>
    <name type="ordered locus">Ctha_1104</name>
</gene>